<feature type="chain" id="PRO_0000058212" description="pH-response regulator protein palI/RIM9">
    <location>
        <begin position="1"/>
        <end position="549"/>
    </location>
</feature>
<feature type="topological domain" description="Cytoplasmic" evidence="1">
    <location>
        <begin position="1"/>
        <end position="9"/>
    </location>
</feature>
<feature type="transmembrane region" description="Helical" evidence="1">
    <location>
        <begin position="10"/>
        <end position="30"/>
    </location>
</feature>
<feature type="topological domain" description="Extracellular" evidence="1">
    <location>
        <begin position="31"/>
        <end position="88"/>
    </location>
</feature>
<feature type="transmembrane region" description="Helical" evidence="1">
    <location>
        <begin position="89"/>
        <end position="109"/>
    </location>
</feature>
<feature type="topological domain" description="Cytoplasmic" evidence="1">
    <location>
        <begin position="110"/>
        <end position="121"/>
    </location>
</feature>
<feature type="transmembrane region" description="Helical" evidence="1">
    <location>
        <begin position="122"/>
        <end position="142"/>
    </location>
</feature>
<feature type="topological domain" description="Extracellular" evidence="1">
    <location>
        <position position="143"/>
    </location>
</feature>
<feature type="transmembrane region" description="Helical" evidence="1">
    <location>
        <begin position="144"/>
        <end position="164"/>
    </location>
</feature>
<feature type="topological domain" description="Cytoplasmic" evidence="1">
    <location>
        <begin position="165"/>
        <end position="549"/>
    </location>
</feature>
<feature type="region of interest" description="Disordered" evidence="2">
    <location>
        <begin position="226"/>
        <end position="549"/>
    </location>
</feature>
<feature type="compositionally biased region" description="Polar residues" evidence="2">
    <location>
        <begin position="227"/>
        <end position="246"/>
    </location>
</feature>
<feature type="compositionally biased region" description="Pro residues" evidence="2">
    <location>
        <begin position="304"/>
        <end position="313"/>
    </location>
</feature>
<feature type="compositionally biased region" description="Basic and acidic residues" evidence="2">
    <location>
        <begin position="314"/>
        <end position="325"/>
    </location>
</feature>
<feature type="compositionally biased region" description="Gly residues" evidence="2">
    <location>
        <begin position="335"/>
        <end position="355"/>
    </location>
</feature>
<feature type="compositionally biased region" description="Gly residues" evidence="2">
    <location>
        <begin position="365"/>
        <end position="378"/>
    </location>
</feature>
<feature type="compositionally biased region" description="Low complexity" evidence="2">
    <location>
        <begin position="379"/>
        <end position="388"/>
    </location>
</feature>
<feature type="compositionally biased region" description="Low complexity" evidence="2">
    <location>
        <begin position="418"/>
        <end position="431"/>
    </location>
</feature>
<feature type="compositionally biased region" description="Polar residues" evidence="2">
    <location>
        <begin position="469"/>
        <end position="480"/>
    </location>
</feature>
<feature type="compositionally biased region" description="Polar residues" evidence="2">
    <location>
        <begin position="491"/>
        <end position="515"/>
    </location>
</feature>
<feature type="compositionally biased region" description="Polar residues" evidence="2">
    <location>
        <begin position="526"/>
        <end position="549"/>
    </location>
</feature>
<feature type="mutagenesis site" description="In palI30; largely prevents proteolytic cleavage of pacC." evidence="4">
    <original>G</original>
    <variation>D</variation>
    <location>
        <position position="47"/>
    </location>
</feature>
<proteinExistence type="evidence at protein level"/>
<gene>
    <name type="primary">palI</name>
    <name type="ORF">AN4853</name>
</gene>
<comment type="function">
    <text evidence="3">Required for the proteolytic cleavage of the transcription factor pacC in response to alkaline ambient pH. Might be a pH sensor.</text>
</comment>
<comment type="subcellular location">
    <subcellularLocation>
        <location>Cell membrane</location>
        <topology>Multi-pass membrane protein</topology>
    </subcellularLocation>
</comment>
<comment type="similarity">
    <text evidence="5">Belongs to the palI/RIM9 family.</text>
</comment>
<comment type="sequence caution" evidence="5">
    <conflict type="erroneous gene model prediction">
        <sequence resource="EMBL-CDS" id="CBF76625"/>
    </conflict>
</comment>
<comment type="sequence caution" evidence="5">
    <conflict type="erroneous gene model prediction">
        <sequence resource="EMBL-CDS" id="EAA60088"/>
    </conflict>
</comment>
<dbReference type="EMBL" id="AJ007629">
    <property type="protein sequence ID" value="CAA07588.2"/>
    <property type="molecule type" value="mRNA"/>
</dbReference>
<dbReference type="EMBL" id="AACD01000083">
    <property type="protein sequence ID" value="EAA60088.1"/>
    <property type="status" value="ALT_SEQ"/>
    <property type="molecule type" value="Genomic_DNA"/>
</dbReference>
<dbReference type="EMBL" id="BN001303">
    <property type="protein sequence ID" value="CBF76625.1"/>
    <property type="status" value="ALT_SEQ"/>
    <property type="molecule type" value="Genomic_DNA"/>
</dbReference>
<dbReference type="RefSeq" id="XP_662457.1">
    <property type="nucleotide sequence ID" value="XM_657365.1"/>
</dbReference>
<dbReference type="STRING" id="227321.O93956"/>
<dbReference type="VEuPathDB" id="FungiDB:AN4853"/>
<dbReference type="eggNOG" id="ENOG502S1J0">
    <property type="taxonomic scope" value="Eukaryota"/>
</dbReference>
<dbReference type="HOGENOM" id="CLU_016694_1_0_1"/>
<dbReference type="InParanoid" id="O93956"/>
<dbReference type="Proteomes" id="UP000000560">
    <property type="component" value="Chromosome III"/>
</dbReference>
<dbReference type="GO" id="GO:0032153">
    <property type="term" value="C:cell division site"/>
    <property type="evidence" value="ECO:0000318"/>
    <property type="project" value="GO_Central"/>
</dbReference>
<dbReference type="GO" id="GO:0030428">
    <property type="term" value="C:cell septum"/>
    <property type="evidence" value="ECO:0000314"/>
    <property type="project" value="AspGD"/>
</dbReference>
<dbReference type="GO" id="GO:0035838">
    <property type="term" value="C:growing cell tip"/>
    <property type="evidence" value="ECO:0000318"/>
    <property type="project" value="GO_Central"/>
</dbReference>
<dbReference type="GO" id="GO:0005886">
    <property type="term" value="C:plasma membrane"/>
    <property type="evidence" value="ECO:0000314"/>
    <property type="project" value="AspGD"/>
</dbReference>
<dbReference type="InterPro" id="IPR051380">
    <property type="entry name" value="pH-response_reg_palI/RIM9"/>
</dbReference>
<dbReference type="InterPro" id="IPR009571">
    <property type="entry name" value="SUR7/Rim9-like_fungi"/>
</dbReference>
<dbReference type="PANTHER" id="PTHR28013">
    <property type="entry name" value="PROTEIN DCV1-RELATED"/>
    <property type="match status" value="1"/>
</dbReference>
<dbReference type="PANTHER" id="PTHR28013:SF3">
    <property type="entry name" value="PROTEIN DCV1-RELATED"/>
    <property type="match status" value="1"/>
</dbReference>
<dbReference type="Pfam" id="PF06687">
    <property type="entry name" value="SUR7"/>
    <property type="match status" value="1"/>
</dbReference>
<keyword id="KW-1003">Cell membrane</keyword>
<keyword id="KW-0472">Membrane</keyword>
<keyword id="KW-1185">Reference proteome</keyword>
<keyword id="KW-0812">Transmembrane</keyword>
<keyword id="KW-1133">Transmembrane helix</keyword>
<evidence type="ECO:0000255" key="1"/>
<evidence type="ECO:0000256" key="2">
    <source>
        <dbReference type="SAM" id="MobiDB-lite"/>
    </source>
</evidence>
<evidence type="ECO:0000269" key="3">
    <source>
    </source>
</evidence>
<evidence type="ECO:0000269" key="4">
    <source>
    </source>
</evidence>
<evidence type="ECO:0000305" key="5"/>
<name>PALI_EMENI</name>
<accession>O93956</accession>
<accession>C8VA65</accession>
<accession>Q5B3M7</accession>
<protein>
    <recommendedName>
        <fullName>pH-response regulator protein palI/RIM9</fullName>
    </recommendedName>
</protein>
<reference key="1">
    <citation type="journal article" date="1998" name="Mol. Microbiol.">
        <title>Putative membrane components of signal transduction pathways for ambient pH regulation in Aspergillus and meiosis in Saccharomyces are homologous.</title>
        <authorList>
            <person name="Denison S.H."/>
            <person name="Negrete-Urtasun S."/>
            <person name="Mingot J.-M."/>
            <person name="Tilburn J."/>
            <person name="Mayer W.A."/>
            <person name="Goel A."/>
            <person name="Espeso E.A."/>
            <person name="Penalva M.A."/>
            <person name="Arst H.N. Jr."/>
        </authorList>
    </citation>
    <scope>NUCLEOTIDE SEQUENCE [MRNA]</scope>
    <scope>MUTAGENESIS OF GLY-47</scope>
</reference>
<reference key="2">
    <citation type="journal article" date="2005" name="Nature">
        <title>Sequencing of Aspergillus nidulans and comparative analysis with A. fumigatus and A. oryzae.</title>
        <authorList>
            <person name="Galagan J.E."/>
            <person name="Calvo S.E."/>
            <person name="Cuomo C."/>
            <person name="Ma L.-J."/>
            <person name="Wortman J.R."/>
            <person name="Batzoglou S."/>
            <person name="Lee S.-I."/>
            <person name="Bastuerkmen M."/>
            <person name="Spevak C.C."/>
            <person name="Clutterbuck J."/>
            <person name="Kapitonov V."/>
            <person name="Jurka J."/>
            <person name="Scazzocchio C."/>
            <person name="Farman M.L."/>
            <person name="Butler J."/>
            <person name="Purcell S."/>
            <person name="Harris S."/>
            <person name="Braus G.H."/>
            <person name="Draht O."/>
            <person name="Busch S."/>
            <person name="D'Enfert C."/>
            <person name="Bouchier C."/>
            <person name="Goldman G.H."/>
            <person name="Bell-Pedersen D."/>
            <person name="Griffiths-Jones S."/>
            <person name="Doonan J.H."/>
            <person name="Yu J."/>
            <person name="Vienken K."/>
            <person name="Pain A."/>
            <person name="Freitag M."/>
            <person name="Selker E.U."/>
            <person name="Archer D.B."/>
            <person name="Penalva M.A."/>
            <person name="Oakley B.R."/>
            <person name="Momany M."/>
            <person name="Tanaka T."/>
            <person name="Kumagai T."/>
            <person name="Asai K."/>
            <person name="Machida M."/>
            <person name="Nierman W.C."/>
            <person name="Denning D.W."/>
            <person name="Caddick M.X."/>
            <person name="Hynes M."/>
            <person name="Paoletti M."/>
            <person name="Fischer R."/>
            <person name="Miller B.L."/>
            <person name="Dyer P.S."/>
            <person name="Sachs M.S."/>
            <person name="Osmani S.A."/>
            <person name="Birren B.W."/>
        </authorList>
    </citation>
    <scope>NUCLEOTIDE SEQUENCE [LARGE SCALE GENOMIC DNA]</scope>
    <source>
        <strain>FGSC A4 / ATCC 38163 / CBS 112.46 / NRRL 194 / M139</strain>
    </source>
</reference>
<reference key="3">
    <citation type="journal article" date="2009" name="Fungal Genet. Biol.">
        <title>The 2008 update of the Aspergillus nidulans genome annotation: a community effort.</title>
        <authorList>
            <person name="Wortman J.R."/>
            <person name="Gilsenan J.M."/>
            <person name="Joardar V."/>
            <person name="Deegan J."/>
            <person name="Clutterbuck J."/>
            <person name="Andersen M.R."/>
            <person name="Archer D."/>
            <person name="Bencina M."/>
            <person name="Braus G."/>
            <person name="Coutinho P."/>
            <person name="von Dohren H."/>
            <person name="Doonan J."/>
            <person name="Driessen A.J."/>
            <person name="Durek P."/>
            <person name="Espeso E."/>
            <person name="Fekete E."/>
            <person name="Flipphi M."/>
            <person name="Estrada C.G."/>
            <person name="Geysens S."/>
            <person name="Goldman G."/>
            <person name="de Groot P.W."/>
            <person name="Hansen K."/>
            <person name="Harris S.D."/>
            <person name="Heinekamp T."/>
            <person name="Helmstaedt K."/>
            <person name="Henrissat B."/>
            <person name="Hofmann G."/>
            <person name="Homan T."/>
            <person name="Horio T."/>
            <person name="Horiuchi H."/>
            <person name="James S."/>
            <person name="Jones M."/>
            <person name="Karaffa L."/>
            <person name="Karanyi Z."/>
            <person name="Kato M."/>
            <person name="Keller N."/>
            <person name="Kelly D.E."/>
            <person name="Kiel J.A."/>
            <person name="Kim J.M."/>
            <person name="van der Klei I.J."/>
            <person name="Klis F.M."/>
            <person name="Kovalchuk A."/>
            <person name="Krasevec N."/>
            <person name="Kubicek C.P."/>
            <person name="Liu B."/>
            <person name="Maccabe A."/>
            <person name="Meyer V."/>
            <person name="Mirabito P."/>
            <person name="Miskei M."/>
            <person name="Mos M."/>
            <person name="Mullins J."/>
            <person name="Nelson D.R."/>
            <person name="Nielsen J."/>
            <person name="Oakley B.R."/>
            <person name="Osmani S.A."/>
            <person name="Pakula T."/>
            <person name="Paszewski A."/>
            <person name="Paulsen I."/>
            <person name="Pilsyk S."/>
            <person name="Pocsi I."/>
            <person name="Punt P.J."/>
            <person name="Ram A.F."/>
            <person name="Ren Q."/>
            <person name="Robellet X."/>
            <person name="Robson G."/>
            <person name="Seiboth B."/>
            <person name="van Solingen P."/>
            <person name="Specht T."/>
            <person name="Sun J."/>
            <person name="Taheri-Talesh N."/>
            <person name="Takeshita N."/>
            <person name="Ussery D."/>
            <person name="vanKuyk P.A."/>
            <person name="Visser H."/>
            <person name="van de Vondervoort P.J."/>
            <person name="de Vries R.P."/>
            <person name="Walton J."/>
            <person name="Xiang X."/>
            <person name="Xiong Y."/>
            <person name="Zeng A.P."/>
            <person name="Brandt B.W."/>
            <person name="Cornell M.J."/>
            <person name="van den Hondel C.A."/>
            <person name="Visser J."/>
            <person name="Oliver S.G."/>
            <person name="Turner G."/>
        </authorList>
    </citation>
    <scope>GENOME REANNOTATION</scope>
    <source>
        <strain>FGSC A4 / ATCC 38163 / CBS 112.46 / NRRL 194 / M139</strain>
    </source>
</reference>
<reference key="4">
    <citation type="journal article" date="1994" name="Mol. Gen. Genet.">
        <title>Two new genes involved in signalling ambient pH in Aspergillus nidulans.</title>
        <authorList>
            <person name="Arst H.N. Jr."/>
            <person name="Bignell E."/>
            <person name="Tilburn J."/>
        </authorList>
    </citation>
    <scope>FUNCTION</scope>
</reference>
<organism>
    <name type="scientific">Emericella nidulans (strain FGSC A4 / ATCC 38163 / CBS 112.46 / NRRL 194 / M139)</name>
    <name type="common">Aspergillus nidulans</name>
    <dbReference type="NCBI Taxonomy" id="227321"/>
    <lineage>
        <taxon>Eukaryota</taxon>
        <taxon>Fungi</taxon>
        <taxon>Dikarya</taxon>
        <taxon>Ascomycota</taxon>
        <taxon>Pezizomycotina</taxon>
        <taxon>Eurotiomycetes</taxon>
        <taxon>Eurotiomycetidae</taxon>
        <taxon>Eurotiales</taxon>
        <taxon>Aspergillaceae</taxon>
        <taxon>Aspergillus</taxon>
        <taxon>Aspergillus subgen. Nidulantes</taxon>
    </lineage>
</organism>
<sequence>MLLKPATPLTILLLIAFVLLLLSVISTPIVKSIPLATFDNVEYGVFGYCKAGTCTAIHIGYTTEEIENTGSTDSDFNLPSDARRSLSSILIVHPIAAFLTLICLCLAAAAHLHAPSHSPRYLLALLILLLPTLLVSLLAFLVDILLFVPHLSWGGWIVLAATIILVTCGVVTCAMRRTLVSRKARKRRIAENAEMSGQNYYNRQNAAAAALNESKPIAPEAKETFVAATQSSESGPTFATFRTNTRSSDDDRTPLNNHSDPSAQDAGYQSRIPGDPVPYNAPRDDFGNPLPPGAYNSAPRMRTPGPPGPPPPDSRVRDQYSDPRRGPPTGFAPRGRGGYPPRGGYGRGGPYGGPYGPNSRAPLTGRGGYMGPMRGGPAGPMARGGYRPQPAAGGYGNARAMGEDEYGYRGPSSRQRTPGPMAAPAAPGPAGQAIEMMPQPRHEPDAQDEVPEQQQLHAISIDNQHEPVSPTSLYSRTQSYVPPRRNWGPQAYQSSEPNLPYQPNQPRHARSQSGSMYYEDEDPVYTSRNESAVGNSGVPSVLTPGNSAK</sequence>